<feature type="chain" id="PRO_0000311276" description="Pre-rRNA-processing protein TSR1 homolog">
    <location>
        <begin position="1"/>
        <end position="805"/>
    </location>
</feature>
<feature type="domain" description="Bms1-type G" evidence="2">
    <location>
        <begin position="81"/>
        <end position="242"/>
    </location>
</feature>
<feature type="region of interest" description="Disordered" evidence="3">
    <location>
        <begin position="1"/>
        <end position="67"/>
    </location>
</feature>
<feature type="compositionally biased region" description="Basic residues" evidence="3">
    <location>
        <begin position="13"/>
        <end position="24"/>
    </location>
</feature>
<feature type="compositionally biased region" description="Basic and acidic residues" evidence="3">
    <location>
        <begin position="46"/>
        <end position="55"/>
    </location>
</feature>
<reference key="1">
    <citation type="submission" date="2004-11" db="EMBL/GenBank/DDBJ databases">
        <authorList>
            <consortium name="The German cDNA consortium"/>
        </authorList>
    </citation>
    <scope>NUCLEOTIDE SEQUENCE [LARGE SCALE MRNA]</scope>
    <source>
        <tissue>Brain cortex</tissue>
    </source>
</reference>
<dbReference type="EMBL" id="CR861426">
    <property type="protein sequence ID" value="CAH93482.1"/>
    <property type="molecule type" value="mRNA"/>
</dbReference>
<dbReference type="RefSeq" id="NP_001127041.1">
    <property type="nucleotide sequence ID" value="NM_001133569.1"/>
</dbReference>
<dbReference type="SMR" id="Q5R434"/>
<dbReference type="FunCoup" id="Q5R434">
    <property type="interactions" value="3046"/>
</dbReference>
<dbReference type="STRING" id="9601.ENSPPYP00000008779"/>
<dbReference type="GeneID" id="100174068"/>
<dbReference type="KEGG" id="pon:100174068"/>
<dbReference type="CTD" id="55720"/>
<dbReference type="eggNOG" id="KOG1980">
    <property type="taxonomic scope" value="Eukaryota"/>
</dbReference>
<dbReference type="InParanoid" id="Q5R434"/>
<dbReference type="OrthoDB" id="119302at2759"/>
<dbReference type="Proteomes" id="UP000001595">
    <property type="component" value="Unplaced"/>
</dbReference>
<dbReference type="GO" id="GO:0005730">
    <property type="term" value="C:nucleolus"/>
    <property type="evidence" value="ECO:0000250"/>
    <property type="project" value="UniProtKB"/>
</dbReference>
<dbReference type="GO" id="GO:0030688">
    <property type="term" value="C:preribosome, small subunit precursor"/>
    <property type="evidence" value="ECO:0007669"/>
    <property type="project" value="TreeGrafter"/>
</dbReference>
<dbReference type="GO" id="GO:0005525">
    <property type="term" value="F:GTP binding"/>
    <property type="evidence" value="ECO:0007669"/>
    <property type="project" value="TreeGrafter"/>
</dbReference>
<dbReference type="GO" id="GO:0003924">
    <property type="term" value="F:GTPase activity"/>
    <property type="evidence" value="ECO:0007669"/>
    <property type="project" value="TreeGrafter"/>
</dbReference>
<dbReference type="GO" id="GO:0034511">
    <property type="term" value="F:U3 snoRNA binding"/>
    <property type="evidence" value="ECO:0007669"/>
    <property type="project" value="TreeGrafter"/>
</dbReference>
<dbReference type="GO" id="GO:0000479">
    <property type="term" value="P:endonucleolytic cleavage of tricistronic rRNA transcript (SSU-rRNA, 5.8S rRNA, LSU-rRNA)"/>
    <property type="evidence" value="ECO:0007669"/>
    <property type="project" value="TreeGrafter"/>
</dbReference>
<dbReference type="GO" id="GO:0000462">
    <property type="term" value="P:maturation of SSU-rRNA from tricistronic rRNA transcript (SSU-rRNA, 5.8S rRNA, LSU-rRNA)"/>
    <property type="evidence" value="ECO:0007669"/>
    <property type="project" value="TreeGrafter"/>
</dbReference>
<dbReference type="InterPro" id="IPR012948">
    <property type="entry name" value="AARP2CN"/>
</dbReference>
<dbReference type="InterPro" id="IPR039761">
    <property type="entry name" value="Bms1/Tsr1"/>
</dbReference>
<dbReference type="InterPro" id="IPR007034">
    <property type="entry name" value="BMS1_TSR1_C"/>
</dbReference>
<dbReference type="InterPro" id="IPR030387">
    <property type="entry name" value="G_Bms1/Tsr1_dom"/>
</dbReference>
<dbReference type="PANTHER" id="PTHR12858:SF1">
    <property type="entry name" value="PRE-RRNA-PROCESSING PROTEIN TSR1 HOMOLOG"/>
    <property type="match status" value="1"/>
</dbReference>
<dbReference type="PANTHER" id="PTHR12858">
    <property type="entry name" value="RIBOSOME BIOGENESIS PROTEIN"/>
    <property type="match status" value="1"/>
</dbReference>
<dbReference type="Pfam" id="PF08142">
    <property type="entry name" value="AARP2CN"/>
    <property type="match status" value="1"/>
</dbReference>
<dbReference type="Pfam" id="PF04950">
    <property type="entry name" value="RIBIOP_C"/>
    <property type="match status" value="1"/>
</dbReference>
<dbReference type="Pfam" id="PF22298">
    <property type="entry name" value="Tsr1_G-like"/>
    <property type="match status" value="1"/>
</dbReference>
<dbReference type="SMART" id="SM00785">
    <property type="entry name" value="AARP2CN"/>
    <property type="match status" value="1"/>
</dbReference>
<dbReference type="SMART" id="SM01362">
    <property type="entry name" value="DUF663"/>
    <property type="match status" value="1"/>
</dbReference>
<dbReference type="PROSITE" id="PS51714">
    <property type="entry name" value="G_BMS1"/>
    <property type="match status" value="1"/>
</dbReference>
<proteinExistence type="evidence at transcript level"/>
<protein>
    <recommendedName>
        <fullName>Pre-rRNA-processing protein TSR1 homolog</fullName>
    </recommendedName>
</protein>
<comment type="function">
    <text evidence="1">Required during maturation of the 40S ribosomal subunit in the nucleolus.</text>
</comment>
<comment type="subcellular location">
    <subcellularLocation>
        <location evidence="1">Nucleus</location>
        <location evidence="1">Nucleolus</location>
    </subcellularLocation>
</comment>
<comment type="similarity">
    <text evidence="4">Belongs to the TRAFAC class translation factor GTPase superfamily. Bms1-like GTPase family. TSR1 subfamily.</text>
</comment>
<name>TSR1_PONAB</name>
<evidence type="ECO:0000250" key="1"/>
<evidence type="ECO:0000255" key="2">
    <source>
        <dbReference type="PROSITE-ProRule" id="PRU01051"/>
    </source>
</evidence>
<evidence type="ECO:0000256" key="3">
    <source>
        <dbReference type="SAM" id="MobiDB-lite"/>
    </source>
</evidence>
<evidence type="ECO:0000305" key="4"/>
<keyword id="KW-0539">Nucleus</keyword>
<keyword id="KW-1185">Reference proteome</keyword>
<keyword id="KW-0690">Ribosome biogenesis</keyword>
<accession>Q5R434</accession>
<organism>
    <name type="scientific">Pongo abelii</name>
    <name type="common">Sumatran orangutan</name>
    <name type="synonym">Pongo pygmaeus abelii</name>
    <dbReference type="NCBI Taxonomy" id="9601"/>
    <lineage>
        <taxon>Eukaryota</taxon>
        <taxon>Metazoa</taxon>
        <taxon>Chordata</taxon>
        <taxon>Craniata</taxon>
        <taxon>Vertebrata</taxon>
        <taxon>Euteleostomi</taxon>
        <taxon>Mammalia</taxon>
        <taxon>Eutheria</taxon>
        <taxon>Euarchontoglires</taxon>
        <taxon>Primates</taxon>
        <taxon>Haplorrhini</taxon>
        <taxon>Catarrhini</taxon>
        <taxon>Hominidae</taxon>
        <taxon>Pongo</taxon>
    </lineage>
</organism>
<gene>
    <name type="primary">TSR1</name>
</gene>
<sequence length="805" mass="91869">MAAHRPGTLKQQNKAHKGGRHRGRGSAQRDGKGRLALKTLSKKVRKELSRVDQRHRASQLRKQKKEAVLAEKRQLGGKDGPPHQVLVVPLHSRISLPEAMQLLQDRDTGTVHLNELGNTQSFMLLCPRLKHRWFFTSARPGDLHIVLDMAKVADTILFLLDPLEGWDSTGDYCLSCLFAQGLPTYTLAVQGISGLPLKKQIDARKKLSKAVEKRFPHDKLLLLDTQQEAGMLLRQLANQKQQHLAFRDRRAYLFARAVDFVASEENNLVGTLKISGYVRGQTLNVNRLLHIVGHGDFQMKQIDAPGDPFPLNPRGIKPQKDPDMAMEICATDTVDDMEEGLKVLMKADPDRQESLQAEVIPDPMEGEQTWPTEEELSEAKDFLKESSKVVKKVPKGTSSYQAEWILDGGSQSGGEGDEYEYDDMEHEDFMEEESQDESSEEEEEEYETMTIGESVHDDLYDKKIDEEAEAKMLEKYKQERLEEMFPDEVDTPRDVAARIRFQKYRGLKSFRTSPWDPKENLPQDYARIFQFQNFTNTRKSIFKEVEEKEVEGAEVGCYVTLHVSEVPVSVVECFRQGTPLIAFSLLPHEQKMSVLNMVVRRDPGNTEPVKAKEELIFHCGFRRFRASPLFSQHTAADKHKLQRFLTADMALVATVYAPITFPPASVLLFKQKSNGMHSLIATGHLMSVDPDRMVIKRVVLSGHPLKMFTKMAVVRYMFFNREDVLWFKPVELRTKWGRRGHIKEPLGTHGHMKCSFNGKLKSQDTVLMNLYKRVFPKWTYDPYVPEPVPWLKSEISSTVPQGGME</sequence>